<comment type="function">
    <text>This protein binds tightly to and inhibits papain and cathepsin B.</text>
</comment>
<comment type="subcellular location">
    <subcellularLocation>
        <location>Secreted</location>
    </subcellularLocation>
</comment>
<comment type="similarity">
    <text evidence="2">Belongs to the cystatin family.</text>
</comment>
<dbReference type="SMR" id="P81061"/>
<dbReference type="MEROPS" id="I25.011"/>
<dbReference type="iPTMnet" id="P81061"/>
<dbReference type="Proteomes" id="UP000694412">
    <property type="component" value="Unplaced"/>
</dbReference>
<dbReference type="GO" id="GO:0005737">
    <property type="term" value="C:cytoplasm"/>
    <property type="evidence" value="ECO:0007669"/>
    <property type="project" value="TreeGrafter"/>
</dbReference>
<dbReference type="GO" id="GO:0005615">
    <property type="term" value="C:extracellular space"/>
    <property type="evidence" value="ECO:0007669"/>
    <property type="project" value="TreeGrafter"/>
</dbReference>
<dbReference type="GO" id="GO:0031982">
    <property type="term" value="C:vesicle"/>
    <property type="evidence" value="ECO:0007669"/>
    <property type="project" value="TreeGrafter"/>
</dbReference>
<dbReference type="GO" id="GO:0004869">
    <property type="term" value="F:cysteine-type endopeptidase inhibitor activity"/>
    <property type="evidence" value="ECO:0007669"/>
    <property type="project" value="UniProtKB-KW"/>
</dbReference>
<dbReference type="CDD" id="cd00042">
    <property type="entry name" value="CY"/>
    <property type="match status" value="1"/>
</dbReference>
<dbReference type="FunFam" id="3.10.450.10:FF:000004">
    <property type="entry name" value="Cystatin C"/>
    <property type="match status" value="1"/>
</dbReference>
<dbReference type="Gene3D" id="3.10.450.10">
    <property type="match status" value="1"/>
</dbReference>
<dbReference type="InterPro" id="IPR000010">
    <property type="entry name" value="Cystatin_dom"/>
</dbReference>
<dbReference type="InterPro" id="IPR046350">
    <property type="entry name" value="Cystatin_sf"/>
</dbReference>
<dbReference type="InterPro" id="IPR018073">
    <property type="entry name" value="Prot_inh_cystat_CS"/>
</dbReference>
<dbReference type="PANTHER" id="PTHR46186">
    <property type="entry name" value="CYSTATIN"/>
    <property type="match status" value="1"/>
</dbReference>
<dbReference type="PANTHER" id="PTHR46186:SF2">
    <property type="entry name" value="CYSTATIN"/>
    <property type="match status" value="1"/>
</dbReference>
<dbReference type="Pfam" id="PF00031">
    <property type="entry name" value="Cystatin"/>
    <property type="match status" value="1"/>
</dbReference>
<dbReference type="SMART" id="SM00043">
    <property type="entry name" value="CY"/>
    <property type="match status" value="1"/>
</dbReference>
<dbReference type="SUPFAM" id="SSF54403">
    <property type="entry name" value="Cystatin/monellin"/>
    <property type="match status" value="1"/>
</dbReference>
<dbReference type="PROSITE" id="PS00287">
    <property type="entry name" value="CYSTATIN"/>
    <property type="match status" value="1"/>
</dbReference>
<reference key="1">
    <citation type="journal article" date="1997" name="FEBS Lett.">
        <title>Quail cystatin: isolation and characterisation of a new member of the cystatin family and its hypothetical interaction with cathepsin B.</title>
        <authorList>
            <person name="Gerhartz B."/>
            <person name="Engh R.A."/>
            <person name="Mentele R."/>
            <person name="Eckerskorn C."/>
            <person name="Torquato R."/>
            <person name="Wittman J."/>
            <person name="Kolb H.J."/>
            <person name="Machleidt W."/>
            <person name="Fritz H."/>
            <person name="Auerswald E.A."/>
        </authorList>
    </citation>
    <scope>PROTEIN SEQUENCE</scope>
    <scope>PHOSPHORYLATION AT SER-80</scope>
    <scope>IDENTIFICATION BY MASS SPECTROMETRY</scope>
    <source>
        <tissue>Egg white</tissue>
    </source>
</reference>
<evidence type="ECO:0000269" key="1">
    <source>
    </source>
</evidence>
<evidence type="ECO:0000305" key="2"/>
<sequence length="116" mass="13093">SEGRSRLLGAPVPVRENDEGLQRALQFAMAEYNKASNDKYSSRVVRIISAKQQLVSGIKYIMEVEIGRTTCPKSSADLQSCEFHDEPEMAKYTTCNFVVYSIPWLNQIKLLKSSCQ</sequence>
<feature type="chain" id="PRO_0000207151" description="Cystatin">
    <location>
        <begin position="1"/>
        <end position="116"/>
    </location>
</feature>
<feature type="short sequence motif" description="Secondary area of contact">
    <location>
        <begin position="53"/>
        <end position="57"/>
    </location>
</feature>
<feature type="site" description="Reactive site">
    <location>
        <position position="9"/>
    </location>
</feature>
<feature type="modified residue" description="Phosphoserine" evidence="1">
    <location>
        <position position="80"/>
    </location>
</feature>
<feature type="disulfide bond">
    <location>
        <begin position="71"/>
        <end position="81"/>
    </location>
</feature>
<feature type="disulfide bond">
    <location>
        <begin position="95"/>
        <end position="115"/>
    </location>
</feature>
<organism>
    <name type="scientific">Coturnix japonica</name>
    <name type="common">Japanese quail</name>
    <name type="synonym">Coturnix coturnix japonica</name>
    <dbReference type="NCBI Taxonomy" id="93934"/>
    <lineage>
        <taxon>Eukaryota</taxon>
        <taxon>Metazoa</taxon>
        <taxon>Chordata</taxon>
        <taxon>Craniata</taxon>
        <taxon>Vertebrata</taxon>
        <taxon>Euteleostomi</taxon>
        <taxon>Archelosauria</taxon>
        <taxon>Archosauria</taxon>
        <taxon>Dinosauria</taxon>
        <taxon>Saurischia</taxon>
        <taxon>Theropoda</taxon>
        <taxon>Coelurosauria</taxon>
        <taxon>Aves</taxon>
        <taxon>Neognathae</taxon>
        <taxon>Galloanserae</taxon>
        <taxon>Galliformes</taxon>
        <taxon>Phasianidae</taxon>
        <taxon>Perdicinae</taxon>
        <taxon>Coturnix</taxon>
    </lineage>
</organism>
<protein>
    <recommendedName>
        <fullName>Cystatin</fullName>
    </recommendedName>
    <alternativeName>
        <fullName>Egg-white cystatin</fullName>
    </alternativeName>
</protein>
<name>CYT_COTJA</name>
<keyword id="KW-0903">Direct protein sequencing</keyword>
<keyword id="KW-1015">Disulfide bond</keyword>
<keyword id="KW-0597">Phosphoprotein</keyword>
<keyword id="KW-0646">Protease inhibitor</keyword>
<keyword id="KW-1185">Reference proteome</keyword>
<keyword id="KW-0964">Secreted</keyword>
<keyword id="KW-0789">Thiol protease inhibitor</keyword>
<proteinExistence type="evidence at protein level"/>
<accession>P81061</accession>